<evidence type="ECO:0000255" key="1">
    <source>
        <dbReference type="HAMAP-Rule" id="MF_00473"/>
    </source>
</evidence>
<accession>P0A0T0</accession>
<accession>O68824</accession>
<gene>
    <name evidence="1" type="primary">pgi</name>
    <name type="ordered locus">XAC1788</name>
</gene>
<reference key="1">
    <citation type="journal article" date="2002" name="Nature">
        <title>Comparison of the genomes of two Xanthomonas pathogens with differing host specificities.</title>
        <authorList>
            <person name="da Silva A.C.R."/>
            <person name="Ferro J.A."/>
            <person name="Reinach F.C."/>
            <person name="Farah C.S."/>
            <person name="Furlan L.R."/>
            <person name="Quaggio R.B."/>
            <person name="Monteiro-Vitorello C.B."/>
            <person name="Van Sluys M.A."/>
            <person name="Almeida N.F. Jr."/>
            <person name="Alves L.M.C."/>
            <person name="do Amaral A.M."/>
            <person name="Bertolini M.C."/>
            <person name="Camargo L.E.A."/>
            <person name="Camarotte G."/>
            <person name="Cannavan F."/>
            <person name="Cardozo J."/>
            <person name="Chambergo F."/>
            <person name="Ciapina L.P."/>
            <person name="Cicarelli R.M.B."/>
            <person name="Coutinho L.L."/>
            <person name="Cursino-Santos J.R."/>
            <person name="El-Dorry H."/>
            <person name="Faria J.B."/>
            <person name="Ferreira A.J.S."/>
            <person name="Ferreira R.C.C."/>
            <person name="Ferro M.I.T."/>
            <person name="Formighieri E.F."/>
            <person name="Franco M.C."/>
            <person name="Greggio C.C."/>
            <person name="Gruber A."/>
            <person name="Katsuyama A.M."/>
            <person name="Kishi L.T."/>
            <person name="Leite R.P."/>
            <person name="Lemos E.G.M."/>
            <person name="Lemos M.V.F."/>
            <person name="Locali E.C."/>
            <person name="Machado M.A."/>
            <person name="Madeira A.M.B.N."/>
            <person name="Martinez-Rossi N.M."/>
            <person name="Martins E.C."/>
            <person name="Meidanis J."/>
            <person name="Menck C.F.M."/>
            <person name="Miyaki C.Y."/>
            <person name="Moon D.H."/>
            <person name="Moreira L.M."/>
            <person name="Novo M.T.M."/>
            <person name="Okura V.K."/>
            <person name="Oliveira M.C."/>
            <person name="Oliveira V.R."/>
            <person name="Pereira H.A."/>
            <person name="Rossi A."/>
            <person name="Sena J.A.D."/>
            <person name="Silva C."/>
            <person name="de Souza R.F."/>
            <person name="Spinola L.A.F."/>
            <person name="Takita M.A."/>
            <person name="Tamura R.E."/>
            <person name="Teixeira E.C."/>
            <person name="Tezza R.I.D."/>
            <person name="Trindade dos Santos M."/>
            <person name="Truffi D."/>
            <person name="Tsai S.M."/>
            <person name="White F.F."/>
            <person name="Setubal J.C."/>
            <person name="Kitajima J.P."/>
        </authorList>
    </citation>
    <scope>NUCLEOTIDE SEQUENCE [LARGE SCALE GENOMIC DNA]</scope>
    <source>
        <strain>306</strain>
    </source>
</reference>
<name>G6PI_XANAC</name>
<protein>
    <recommendedName>
        <fullName evidence="1">Glucose-6-phosphate isomerase</fullName>
        <shortName evidence="1">GPI</shortName>
        <ecNumber evidence="1">5.3.1.9</ecNumber>
    </recommendedName>
    <alternativeName>
        <fullName evidence="1">Phosphoglucose isomerase</fullName>
        <shortName evidence="1">PGI</shortName>
    </alternativeName>
    <alternativeName>
        <fullName evidence="1">Phosphohexose isomerase</fullName>
        <shortName evidence="1">PHI</shortName>
    </alternativeName>
</protein>
<keyword id="KW-0963">Cytoplasm</keyword>
<keyword id="KW-0312">Gluconeogenesis</keyword>
<keyword id="KW-0324">Glycolysis</keyword>
<keyword id="KW-0413">Isomerase</keyword>
<dbReference type="EC" id="5.3.1.9" evidence="1"/>
<dbReference type="EMBL" id="AE008923">
    <property type="protein sequence ID" value="AAM36651.1"/>
    <property type="molecule type" value="Genomic_DNA"/>
</dbReference>
<dbReference type="RefSeq" id="WP_011051139.1">
    <property type="nucleotide sequence ID" value="NC_003919.1"/>
</dbReference>
<dbReference type="SMR" id="P0A0T0"/>
<dbReference type="GeneID" id="66910936"/>
<dbReference type="KEGG" id="xac:XAC1788"/>
<dbReference type="eggNOG" id="COG0166">
    <property type="taxonomic scope" value="Bacteria"/>
</dbReference>
<dbReference type="HOGENOM" id="CLU_017947_3_1_6"/>
<dbReference type="UniPathway" id="UPA00109">
    <property type="reaction ID" value="UER00181"/>
</dbReference>
<dbReference type="UniPathway" id="UPA00138"/>
<dbReference type="Proteomes" id="UP000000576">
    <property type="component" value="Chromosome"/>
</dbReference>
<dbReference type="GO" id="GO:0005829">
    <property type="term" value="C:cytosol"/>
    <property type="evidence" value="ECO:0007669"/>
    <property type="project" value="TreeGrafter"/>
</dbReference>
<dbReference type="GO" id="GO:0097367">
    <property type="term" value="F:carbohydrate derivative binding"/>
    <property type="evidence" value="ECO:0007669"/>
    <property type="project" value="InterPro"/>
</dbReference>
<dbReference type="GO" id="GO:0004347">
    <property type="term" value="F:glucose-6-phosphate isomerase activity"/>
    <property type="evidence" value="ECO:0007669"/>
    <property type="project" value="UniProtKB-UniRule"/>
</dbReference>
<dbReference type="GO" id="GO:0048029">
    <property type="term" value="F:monosaccharide binding"/>
    <property type="evidence" value="ECO:0007669"/>
    <property type="project" value="TreeGrafter"/>
</dbReference>
<dbReference type="GO" id="GO:0006094">
    <property type="term" value="P:gluconeogenesis"/>
    <property type="evidence" value="ECO:0007669"/>
    <property type="project" value="UniProtKB-UniRule"/>
</dbReference>
<dbReference type="GO" id="GO:0051156">
    <property type="term" value="P:glucose 6-phosphate metabolic process"/>
    <property type="evidence" value="ECO:0007669"/>
    <property type="project" value="TreeGrafter"/>
</dbReference>
<dbReference type="GO" id="GO:0006096">
    <property type="term" value="P:glycolytic process"/>
    <property type="evidence" value="ECO:0007669"/>
    <property type="project" value="UniProtKB-UniRule"/>
</dbReference>
<dbReference type="CDD" id="cd05015">
    <property type="entry name" value="SIS_PGI_1"/>
    <property type="match status" value="1"/>
</dbReference>
<dbReference type="CDD" id="cd05016">
    <property type="entry name" value="SIS_PGI_2"/>
    <property type="match status" value="1"/>
</dbReference>
<dbReference type="Gene3D" id="1.10.1390.10">
    <property type="match status" value="1"/>
</dbReference>
<dbReference type="Gene3D" id="3.40.50.10490">
    <property type="entry name" value="Glucose-6-phosphate isomerase like protein, domain 1"/>
    <property type="match status" value="2"/>
</dbReference>
<dbReference type="HAMAP" id="MF_00473">
    <property type="entry name" value="G6P_isomerase"/>
    <property type="match status" value="1"/>
</dbReference>
<dbReference type="InterPro" id="IPR001672">
    <property type="entry name" value="G6P_Isomerase"/>
</dbReference>
<dbReference type="InterPro" id="IPR023096">
    <property type="entry name" value="G6P_Isomerase_C"/>
</dbReference>
<dbReference type="InterPro" id="IPR018189">
    <property type="entry name" value="Phosphoglucose_isomerase_CS"/>
</dbReference>
<dbReference type="InterPro" id="IPR046348">
    <property type="entry name" value="SIS_dom_sf"/>
</dbReference>
<dbReference type="InterPro" id="IPR035476">
    <property type="entry name" value="SIS_PGI_1"/>
</dbReference>
<dbReference type="InterPro" id="IPR035482">
    <property type="entry name" value="SIS_PGI_2"/>
</dbReference>
<dbReference type="NCBIfam" id="NF001211">
    <property type="entry name" value="PRK00179.1"/>
    <property type="match status" value="1"/>
</dbReference>
<dbReference type="PANTHER" id="PTHR11469">
    <property type="entry name" value="GLUCOSE-6-PHOSPHATE ISOMERASE"/>
    <property type="match status" value="1"/>
</dbReference>
<dbReference type="PANTHER" id="PTHR11469:SF1">
    <property type="entry name" value="GLUCOSE-6-PHOSPHATE ISOMERASE"/>
    <property type="match status" value="1"/>
</dbReference>
<dbReference type="Pfam" id="PF00342">
    <property type="entry name" value="PGI"/>
    <property type="match status" value="1"/>
</dbReference>
<dbReference type="PRINTS" id="PR00662">
    <property type="entry name" value="G6PISOMERASE"/>
</dbReference>
<dbReference type="SUPFAM" id="SSF53697">
    <property type="entry name" value="SIS domain"/>
    <property type="match status" value="1"/>
</dbReference>
<dbReference type="PROSITE" id="PS00765">
    <property type="entry name" value="P_GLUCOSE_ISOMERASE_1"/>
    <property type="match status" value="1"/>
</dbReference>
<dbReference type="PROSITE" id="PS00174">
    <property type="entry name" value="P_GLUCOSE_ISOMERASE_2"/>
    <property type="match status" value="1"/>
</dbReference>
<dbReference type="PROSITE" id="PS51463">
    <property type="entry name" value="P_GLUCOSE_ISOMERASE_3"/>
    <property type="match status" value="1"/>
</dbReference>
<proteinExistence type="inferred from homology"/>
<sequence>MTQTNGFDALHAHAQRLRGAAIPALLAAEPERPTQYARQVGPLYFNFARQKYDRAALDALFAIARERDLSGAFQRLFRGEQVNVTEQRAALHTALRGDLTDAPVASEAYATAEEVRQRMGSLIQQLEATDVTDIVSVGIGGSDLGPRLVADALRAPSGARFRVHFVSNVDGAAMQRTLATLDPARTAGILISKTFGTQETLLNGSILHAWLGGSERLYAVSANPERAAKAFDIAPGRVLPMWDWVGGRYSLWSAVGFPIALAIGFERFEQLLEGAAQFDAHVLNTPLEENVAVLHGLTAVWNRNLLGSATHAVMTYDQRLALLPAYLQQLVMESLGKRVKLDGSAVDSDTVSVWWGGAGTDVQHSFFQALHQGTSVVPADFIGTVHNDDPYAENHTALMANVLAQTEALANGQDSSDPHRSYPGGRPSTVILLDALTPQALGALISMYEHSVYVQSVMWGINAFDQFGVELGKQLASQLLPALKGESVDVADPVTRELLNKLRG</sequence>
<comment type="function">
    <text evidence="1">Catalyzes the reversible isomerization of glucose-6-phosphate to fructose-6-phosphate.</text>
</comment>
<comment type="catalytic activity">
    <reaction evidence="1">
        <text>alpha-D-glucose 6-phosphate = beta-D-fructose 6-phosphate</text>
        <dbReference type="Rhea" id="RHEA:11816"/>
        <dbReference type="ChEBI" id="CHEBI:57634"/>
        <dbReference type="ChEBI" id="CHEBI:58225"/>
        <dbReference type="EC" id="5.3.1.9"/>
    </reaction>
</comment>
<comment type="pathway">
    <text evidence="1">Carbohydrate biosynthesis; gluconeogenesis.</text>
</comment>
<comment type="pathway">
    <text evidence="1">Carbohydrate degradation; glycolysis; D-glyceraldehyde 3-phosphate and glycerone phosphate from D-glucose: step 2/4.</text>
</comment>
<comment type="subcellular location">
    <subcellularLocation>
        <location evidence="1">Cytoplasm</location>
    </subcellularLocation>
</comment>
<comment type="similarity">
    <text evidence="1">Belongs to the GPI family.</text>
</comment>
<feature type="chain" id="PRO_0000180768" description="Glucose-6-phosphate isomerase">
    <location>
        <begin position="1"/>
        <end position="504"/>
    </location>
</feature>
<feature type="active site" description="Proton donor" evidence="1">
    <location>
        <position position="333"/>
    </location>
</feature>
<feature type="active site" evidence="1">
    <location>
        <position position="364"/>
    </location>
</feature>
<feature type="active site" evidence="1">
    <location>
        <position position="473"/>
    </location>
</feature>
<organism>
    <name type="scientific">Xanthomonas axonopodis pv. citri (strain 306)</name>
    <dbReference type="NCBI Taxonomy" id="190486"/>
    <lineage>
        <taxon>Bacteria</taxon>
        <taxon>Pseudomonadati</taxon>
        <taxon>Pseudomonadota</taxon>
        <taxon>Gammaproteobacteria</taxon>
        <taxon>Lysobacterales</taxon>
        <taxon>Lysobacteraceae</taxon>
        <taxon>Xanthomonas</taxon>
    </lineage>
</organism>